<comment type="function">
    <text evidence="1">Protein S19 forms a complex with S13 that binds strongly to the 16S ribosomal RNA.</text>
</comment>
<comment type="similarity">
    <text evidence="1">Belongs to the universal ribosomal protein uS19 family.</text>
</comment>
<protein>
    <recommendedName>
        <fullName evidence="1">Small ribosomal subunit protein uS19</fullName>
    </recommendedName>
    <alternativeName>
        <fullName evidence="2">30S ribosomal protein S19</fullName>
    </alternativeName>
</protein>
<gene>
    <name evidence="1" type="primary">rpsS</name>
    <name type="ordered locus">Dvul_1761</name>
</gene>
<organism>
    <name type="scientific">Nitratidesulfovibrio vulgaris (strain DP4)</name>
    <name type="common">Desulfovibrio vulgaris</name>
    <dbReference type="NCBI Taxonomy" id="391774"/>
    <lineage>
        <taxon>Bacteria</taxon>
        <taxon>Pseudomonadati</taxon>
        <taxon>Thermodesulfobacteriota</taxon>
        <taxon>Desulfovibrionia</taxon>
        <taxon>Desulfovibrionales</taxon>
        <taxon>Desulfovibrionaceae</taxon>
        <taxon>Nitratidesulfovibrio</taxon>
    </lineage>
</organism>
<accession>A1VEB2</accession>
<reference key="1">
    <citation type="journal article" date="2009" name="Environ. Microbiol.">
        <title>Contribution of mobile genetic elements to Desulfovibrio vulgaris genome plasticity.</title>
        <authorList>
            <person name="Walker C.B."/>
            <person name="Stolyar S."/>
            <person name="Chivian D."/>
            <person name="Pinel N."/>
            <person name="Gabster J.A."/>
            <person name="Dehal P.S."/>
            <person name="He Z."/>
            <person name="Yang Z.K."/>
            <person name="Yen H.C."/>
            <person name="Zhou J."/>
            <person name="Wall J.D."/>
            <person name="Hazen T.C."/>
            <person name="Arkin A.P."/>
            <person name="Stahl D.A."/>
        </authorList>
    </citation>
    <scope>NUCLEOTIDE SEQUENCE [LARGE SCALE GENOMIC DNA]</scope>
    <source>
        <strain>DP4</strain>
    </source>
</reference>
<name>RS19_NITV4</name>
<dbReference type="EMBL" id="CP000527">
    <property type="protein sequence ID" value="ABM28778.1"/>
    <property type="molecule type" value="Genomic_DNA"/>
</dbReference>
<dbReference type="RefSeq" id="WP_010938602.1">
    <property type="nucleotide sequence ID" value="NC_008751.1"/>
</dbReference>
<dbReference type="SMR" id="A1VEB2"/>
<dbReference type="KEGG" id="dvl:Dvul_1761"/>
<dbReference type="HOGENOM" id="CLU_144911_0_1_7"/>
<dbReference type="Proteomes" id="UP000009173">
    <property type="component" value="Chromosome"/>
</dbReference>
<dbReference type="GO" id="GO:0005737">
    <property type="term" value="C:cytoplasm"/>
    <property type="evidence" value="ECO:0007669"/>
    <property type="project" value="UniProtKB-ARBA"/>
</dbReference>
<dbReference type="GO" id="GO:0015935">
    <property type="term" value="C:small ribosomal subunit"/>
    <property type="evidence" value="ECO:0007669"/>
    <property type="project" value="InterPro"/>
</dbReference>
<dbReference type="GO" id="GO:0019843">
    <property type="term" value="F:rRNA binding"/>
    <property type="evidence" value="ECO:0007669"/>
    <property type="project" value="UniProtKB-UniRule"/>
</dbReference>
<dbReference type="GO" id="GO:0003735">
    <property type="term" value="F:structural constituent of ribosome"/>
    <property type="evidence" value="ECO:0007669"/>
    <property type="project" value="InterPro"/>
</dbReference>
<dbReference type="GO" id="GO:0000028">
    <property type="term" value="P:ribosomal small subunit assembly"/>
    <property type="evidence" value="ECO:0007669"/>
    <property type="project" value="TreeGrafter"/>
</dbReference>
<dbReference type="GO" id="GO:0006412">
    <property type="term" value="P:translation"/>
    <property type="evidence" value="ECO:0007669"/>
    <property type="project" value="UniProtKB-UniRule"/>
</dbReference>
<dbReference type="FunFam" id="3.30.860.10:FF:000001">
    <property type="entry name" value="30S ribosomal protein S19"/>
    <property type="match status" value="1"/>
</dbReference>
<dbReference type="Gene3D" id="3.30.860.10">
    <property type="entry name" value="30s Ribosomal Protein S19, Chain A"/>
    <property type="match status" value="1"/>
</dbReference>
<dbReference type="HAMAP" id="MF_00531">
    <property type="entry name" value="Ribosomal_uS19"/>
    <property type="match status" value="1"/>
</dbReference>
<dbReference type="InterPro" id="IPR002222">
    <property type="entry name" value="Ribosomal_uS19"/>
</dbReference>
<dbReference type="InterPro" id="IPR005732">
    <property type="entry name" value="Ribosomal_uS19_bac-type"/>
</dbReference>
<dbReference type="InterPro" id="IPR020934">
    <property type="entry name" value="Ribosomal_uS19_CS"/>
</dbReference>
<dbReference type="InterPro" id="IPR023575">
    <property type="entry name" value="Ribosomal_uS19_SF"/>
</dbReference>
<dbReference type="NCBIfam" id="TIGR01050">
    <property type="entry name" value="rpsS_bact"/>
    <property type="match status" value="1"/>
</dbReference>
<dbReference type="PANTHER" id="PTHR11880">
    <property type="entry name" value="RIBOSOMAL PROTEIN S19P FAMILY MEMBER"/>
    <property type="match status" value="1"/>
</dbReference>
<dbReference type="PANTHER" id="PTHR11880:SF8">
    <property type="entry name" value="SMALL RIBOSOMAL SUBUNIT PROTEIN US19M"/>
    <property type="match status" value="1"/>
</dbReference>
<dbReference type="Pfam" id="PF00203">
    <property type="entry name" value="Ribosomal_S19"/>
    <property type="match status" value="1"/>
</dbReference>
<dbReference type="PIRSF" id="PIRSF002144">
    <property type="entry name" value="Ribosomal_S19"/>
    <property type="match status" value="1"/>
</dbReference>
<dbReference type="PRINTS" id="PR00975">
    <property type="entry name" value="RIBOSOMALS19"/>
</dbReference>
<dbReference type="SUPFAM" id="SSF54570">
    <property type="entry name" value="Ribosomal protein S19"/>
    <property type="match status" value="1"/>
</dbReference>
<dbReference type="PROSITE" id="PS00323">
    <property type="entry name" value="RIBOSOMAL_S19"/>
    <property type="match status" value="1"/>
</dbReference>
<evidence type="ECO:0000255" key="1">
    <source>
        <dbReference type="HAMAP-Rule" id="MF_00531"/>
    </source>
</evidence>
<evidence type="ECO:0000305" key="2"/>
<keyword id="KW-0687">Ribonucleoprotein</keyword>
<keyword id="KW-0689">Ribosomal protein</keyword>
<keyword id="KW-0694">RNA-binding</keyword>
<keyword id="KW-0699">rRNA-binding</keyword>
<proteinExistence type="inferred from homology"/>
<feature type="chain" id="PRO_1000051043" description="Small ribosomal subunit protein uS19">
    <location>
        <begin position="1"/>
        <end position="93"/>
    </location>
</feature>
<sequence length="93" mass="10492">MPRSLKKGPFVDGHLMKKVDMAVANSDRRVIKTWTRRSTILPEMVGLTFAVHNGKKFMPVFVTENMVGHKLGEFAPTRTYHGHAADKKSKAKK</sequence>